<accession>B3GXZ2</accession>
<protein>
    <recommendedName>
        <fullName evidence="1">Formate-dependent phosphoribosylglycinamide formyltransferase</fullName>
        <ecNumber evidence="1">6.3.1.21</ecNumber>
    </recommendedName>
    <alternativeName>
        <fullName evidence="1">5'-phosphoribosylglycinamide transformylase 2</fullName>
    </alternativeName>
    <alternativeName>
        <fullName evidence="1">Formate-dependent GAR transformylase</fullName>
    </alternativeName>
    <alternativeName>
        <fullName evidence="1">GAR transformylase 2</fullName>
        <shortName evidence="1">GART 2</shortName>
    </alternativeName>
    <alternativeName>
        <fullName evidence="1">Non-folate glycinamide ribonucleotide transformylase</fullName>
    </alternativeName>
    <alternativeName>
        <fullName evidence="1">Phosphoribosylglycinamide formyltransferase 2</fullName>
    </alternativeName>
</protein>
<evidence type="ECO:0000255" key="1">
    <source>
        <dbReference type="HAMAP-Rule" id="MF_01643"/>
    </source>
</evidence>
<proteinExistence type="inferred from homology"/>
<gene>
    <name evidence="1" type="primary">purT</name>
    <name type="ordered locus">APP7_1163</name>
</gene>
<feature type="chain" id="PRO_1000186875" description="Formate-dependent phosphoribosylglycinamide formyltransferase">
    <location>
        <begin position="1"/>
        <end position="393"/>
    </location>
</feature>
<feature type="domain" description="ATP-grasp" evidence="1">
    <location>
        <begin position="119"/>
        <end position="308"/>
    </location>
</feature>
<feature type="binding site" evidence="1">
    <location>
        <begin position="22"/>
        <end position="23"/>
    </location>
    <ligand>
        <name>N(1)-(5-phospho-beta-D-ribosyl)glycinamide</name>
        <dbReference type="ChEBI" id="CHEBI:143788"/>
    </ligand>
</feature>
<feature type="binding site" evidence="1">
    <location>
        <position position="82"/>
    </location>
    <ligand>
        <name>N(1)-(5-phospho-beta-D-ribosyl)glycinamide</name>
        <dbReference type="ChEBI" id="CHEBI:143788"/>
    </ligand>
</feature>
<feature type="binding site" evidence="1">
    <location>
        <position position="114"/>
    </location>
    <ligand>
        <name>ATP</name>
        <dbReference type="ChEBI" id="CHEBI:30616"/>
    </ligand>
</feature>
<feature type="binding site" evidence="1">
    <location>
        <position position="155"/>
    </location>
    <ligand>
        <name>ATP</name>
        <dbReference type="ChEBI" id="CHEBI:30616"/>
    </ligand>
</feature>
<feature type="binding site" evidence="1">
    <location>
        <begin position="160"/>
        <end position="165"/>
    </location>
    <ligand>
        <name>ATP</name>
        <dbReference type="ChEBI" id="CHEBI:30616"/>
    </ligand>
</feature>
<feature type="binding site" evidence="1">
    <location>
        <begin position="195"/>
        <end position="198"/>
    </location>
    <ligand>
        <name>ATP</name>
        <dbReference type="ChEBI" id="CHEBI:30616"/>
    </ligand>
</feature>
<feature type="binding site" evidence="1">
    <location>
        <position position="203"/>
    </location>
    <ligand>
        <name>ATP</name>
        <dbReference type="ChEBI" id="CHEBI:30616"/>
    </ligand>
</feature>
<feature type="binding site" evidence="1">
    <location>
        <position position="267"/>
    </location>
    <ligand>
        <name>Mg(2+)</name>
        <dbReference type="ChEBI" id="CHEBI:18420"/>
    </ligand>
</feature>
<feature type="binding site" evidence="1">
    <location>
        <position position="279"/>
    </location>
    <ligand>
        <name>Mg(2+)</name>
        <dbReference type="ChEBI" id="CHEBI:18420"/>
    </ligand>
</feature>
<feature type="binding site" evidence="1">
    <location>
        <position position="286"/>
    </location>
    <ligand>
        <name>N(1)-(5-phospho-beta-D-ribosyl)glycinamide</name>
        <dbReference type="ChEBI" id="CHEBI:143788"/>
    </ligand>
</feature>
<feature type="binding site" evidence="1">
    <location>
        <position position="356"/>
    </location>
    <ligand>
        <name>N(1)-(5-phospho-beta-D-ribosyl)glycinamide</name>
        <dbReference type="ChEBI" id="CHEBI:143788"/>
    </ligand>
</feature>
<feature type="binding site" evidence="1">
    <location>
        <begin position="363"/>
        <end position="364"/>
    </location>
    <ligand>
        <name>N(1)-(5-phospho-beta-D-ribosyl)glycinamide</name>
        <dbReference type="ChEBI" id="CHEBI:143788"/>
    </ligand>
</feature>
<reference key="1">
    <citation type="submission" date="2008-06" db="EMBL/GenBank/DDBJ databases">
        <title>Genome and proteome analysis of A. pleuropneumoniae serotype 7.</title>
        <authorList>
            <person name="Linke B."/>
            <person name="Buettner F."/>
            <person name="Martinez-Arias R."/>
            <person name="Goesmann A."/>
            <person name="Baltes N."/>
            <person name="Tegetmeyer H."/>
            <person name="Singh M."/>
            <person name="Gerlach G.F."/>
        </authorList>
    </citation>
    <scope>NUCLEOTIDE SEQUENCE [LARGE SCALE GENOMIC DNA]</scope>
    <source>
        <strain>AP76</strain>
    </source>
</reference>
<keyword id="KW-0067">ATP-binding</keyword>
<keyword id="KW-0436">Ligase</keyword>
<keyword id="KW-0460">Magnesium</keyword>
<keyword id="KW-0479">Metal-binding</keyword>
<keyword id="KW-0547">Nucleotide-binding</keyword>
<keyword id="KW-0658">Purine biosynthesis</keyword>
<name>PURT_ACTP7</name>
<comment type="function">
    <text evidence="1">Involved in the de novo purine biosynthesis. Catalyzes the transfer of formate to 5-phospho-ribosyl-glycinamide (GAR), producing 5-phospho-ribosyl-N-formylglycinamide (FGAR). Formate is provided by PurU via hydrolysis of 10-formyl-tetrahydrofolate.</text>
</comment>
<comment type="catalytic activity">
    <reaction evidence="1">
        <text>N(1)-(5-phospho-beta-D-ribosyl)glycinamide + formate + ATP = N(2)-formyl-N(1)-(5-phospho-beta-D-ribosyl)glycinamide + ADP + phosphate + H(+)</text>
        <dbReference type="Rhea" id="RHEA:24829"/>
        <dbReference type="ChEBI" id="CHEBI:15378"/>
        <dbReference type="ChEBI" id="CHEBI:15740"/>
        <dbReference type="ChEBI" id="CHEBI:30616"/>
        <dbReference type="ChEBI" id="CHEBI:43474"/>
        <dbReference type="ChEBI" id="CHEBI:143788"/>
        <dbReference type="ChEBI" id="CHEBI:147286"/>
        <dbReference type="ChEBI" id="CHEBI:456216"/>
        <dbReference type="EC" id="6.3.1.21"/>
    </reaction>
    <physiologicalReaction direction="left-to-right" evidence="1">
        <dbReference type="Rhea" id="RHEA:24830"/>
    </physiologicalReaction>
</comment>
<comment type="pathway">
    <text evidence="1">Purine metabolism; IMP biosynthesis via de novo pathway; N(2)-formyl-N(1)-(5-phospho-D-ribosyl)glycinamide from N(1)-(5-phospho-D-ribosyl)glycinamide (formate route): step 1/1.</text>
</comment>
<comment type="subunit">
    <text evidence="1">Homodimer.</text>
</comment>
<comment type="similarity">
    <text evidence="1">Belongs to the PurK/PurT family.</text>
</comment>
<organism>
    <name type="scientific">Actinobacillus pleuropneumoniae serotype 7 (strain AP76)</name>
    <dbReference type="NCBI Taxonomy" id="537457"/>
    <lineage>
        <taxon>Bacteria</taxon>
        <taxon>Pseudomonadati</taxon>
        <taxon>Pseudomonadota</taxon>
        <taxon>Gammaproteobacteria</taxon>
        <taxon>Pasteurellales</taxon>
        <taxon>Pasteurellaceae</taxon>
        <taxon>Actinobacillus</taxon>
    </lineage>
</organism>
<sequence>MTTIGTPLRPNATKVMMLGSGELGKEVVIELQRLGVEVIAVDRYENAPAQQVAHRAYTISMLDGAALRALVEKEKPDFIVPEVEAIATATLVELEQEGYNVVPTAKATQLTMNREGIRRLAAEELGLKTSPYRFVDNLEDFKQAVAEIGIPCVVKPIMSSSGHGQSVIKSEDQIQQAWDYSQEGGRAGGGRVIVEGFIKFDYEITQLTVRHVNGTSFLAPIGHRQEDGDYRESWQPQAMSDLALKRAQETAERITTALGGRGIFGVELFVCGDEIIFNEVSPRPHDTGMVTMASQELSQFALHARAILGLPIPEIYQISPAASKAIVVEGKSNNMTFGNLDKVLEEIGTNIRLFGKGEVNGHRRLGVILARDENTEKALAKAERAYAKLAVQL</sequence>
<dbReference type="EC" id="6.3.1.21" evidence="1"/>
<dbReference type="EMBL" id="CP001091">
    <property type="protein sequence ID" value="ACE61815.1"/>
    <property type="molecule type" value="Genomic_DNA"/>
</dbReference>
<dbReference type="RefSeq" id="WP_005597983.1">
    <property type="nucleotide sequence ID" value="NC_010939.1"/>
</dbReference>
<dbReference type="SMR" id="B3GXZ2"/>
<dbReference type="GeneID" id="48599338"/>
<dbReference type="KEGG" id="apa:APP7_1163"/>
<dbReference type="HOGENOM" id="CLU_011534_1_3_6"/>
<dbReference type="UniPathway" id="UPA00074">
    <property type="reaction ID" value="UER00127"/>
</dbReference>
<dbReference type="Proteomes" id="UP000001226">
    <property type="component" value="Chromosome"/>
</dbReference>
<dbReference type="GO" id="GO:0005829">
    <property type="term" value="C:cytosol"/>
    <property type="evidence" value="ECO:0007669"/>
    <property type="project" value="TreeGrafter"/>
</dbReference>
<dbReference type="GO" id="GO:0005524">
    <property type="term" value="F:ATP binding"/>
    <property type="evidence" value="ECO:0007669"/>
    <property type="project" value="UniProtKB-UniRule"/>
</dbReference>
<dbReference type="GO" id="GO:0000287">
    <property type="term" value="F:magnesium ion binding"/>
    <property type="evidence" value="ECO:0007669"/>
    <property type="project" value="InterPro"/>
</dbReference>
<dbReference type="GO" id="GO:0043815">
    <property type="term" value="F:phosphoribosylglycinamide formyltransferase 2 activity"/>
    <property type="evidence" value="ECO:0007669"/>
    <property type="project" value="UniProtKB-UniRule"/>
</dbReference>
<dbReference type="GO" id="GO:0004644">
    <property type="term" value="F:phosphoribosylglycinamide formyltransferase activity"/>
    <property type="evidence" value="ECO:0007669"/>
    <property type="project" value="InterPro"/>
</dbReference>
<dbReference type="GO" id="GO:0006189">
    <property type="term" value="P:'de novo' IMP biosynthetic process"/>
    <property type="evidence" value="ECO:0007669"/>
    <property type="project" value="UniProtKB-UniRule"/>
</dbReference>
<dbReference type="FunFam" id="3.30.1490.20:FF:000013">
    <property type="entry name" value="Formate-dependent phosphoribosylglycinamide formyltransferase"/>
    <property type="match status" value="1"/>
</dbReference>
<dbReference type="FunFam" id="3.40.50.20:FF:000007">
    <property type="entry name" value="Formate-dependent phosphoribosylglycinamide formyltransferase"/>
    <property type="match status" value="1"/>
</dbReference>
<dbReference type="Gene3D" id="3.40.50.20">
    <property type="match status" value="1"/>
</dbReference>
<dbReference type="Gene3D" id="3.30.1490.20">
    <property type="entry name" value="ATP-grasp fold, A domain"/>
    <property type="match status" value="1"/>
</dbReference>
<dbReference type="Gene3D" id="3.30.470.20">
    <property type="entry name" value="ATP-grasp fold, B domain"/>
    <property type="match status" value="1"/>
</dbReference>
<dbReference type="HAMAP" id="MF_01643">
    <property type="entry name" value="PurT"/>
    <property type="match status" value="1"/>
</dbReference>
<dbReference type="InterPro" id="IPR011761">
    <property type="entry name" value="ATP-grasp"/>
</dbReference>
<dbReference type="InterPro" id="IPR003135">
    <property type="entry name" value="ATP-grasp_carboxylate-amine"/>
</dbReference>
<dbReference type="InterPro" id="IPR013815">
    <property type="entry name" value="ATP_grasp_subdomain_1"/>
</dbReference>
<dbReference type="InterPro" id="IPR016185">
    <property type="entry name" value="PreATP-grasp_dom_sf"/>
</dbReference>
<dbReference type="InterPro" id="IPR005862">
    <property type="entry name" value="PurT"/>
</dbReference>
<dbReference type="InterPro" id="IPR054350">
    <property type="entry name" value="PurT/PurK_preATP-grasp"/>
</dbReference>
<dbReference type="InterPro" id="IPR048740">
    <property type="entry name" value="PurT_C"/>
</dbReference>
<dbReference type="NCBIfam" id="NF006766">
    <property type="entry name" value="PRK09288.1"/>
    <property type="match status" value="1"/>
</dbReference>
<dbReference type="NCBIfam" id="TIGR01142">
    <property type="entry name" value="purT"/>
    <property type="match status" value="1"/>
</dbReference>
<dbReference type="PANTHER" id="PTHR43055">
    <property type="entry name" value="FORMATE-DEPENDENT PHOSPHORIBOSYLGLYCINAMIDE FORMYLTRANSFERASE"/>
    <property type="match status" value="1"/>
</dbReference>
<dbReference type="PANTHER" id="PTHR43055:SF1">
    <property type="entry name" value="FORMATE-DEPENDENT PHOSPHORIBOSYLGLYCINAMIDE FORMYLTRANSFERASE"/>
    <property type="match status" value="1"/>
</dbReference>
<dbReference type="Pfam" id="PF02222">
    <property type="entry name" value="ATP-grasp"/>
    <property type="match status" value="1"/>
</dbReference>
<dbReference type="Pfam" id="PF21244">
    <property type="entry name" value="PurT_C"/>
    <property type="match status" value="1"/>
</dbReference>
<dbReference type="Pfam" id="PF22660">
    <property type="entry name" value="RS_preATP-grasp-like"/>
    <property type="match status" value="1"/>
</dbReference>
<dbReference type="SUPFAM" id="SSF56059">
    <property type="entry name" value="Glutathione synthetase ATP-binding domain-like"/>
    <property type="match status" value="1"/>
</dbReference>
<dbReference type="SUPFAM" id="SSF52440">
    <property type="entry name" value="PreATP-grasp domain"/>
    <property type="match status" value="1"/>
</dbReference>
<dbReference type="PROSITE" id="PS50975">
    <property type="entry name" value="ATP_GRASP"/>
    <property type="match status" value="1"/>
</dbReference>